<protein>
    <recommendedName>
        <fullName evidence="1">Phosphoenolpyruvate carboxylase</fullName>
        <shortName evidence="1">PEPC</shortName>
        <shortName evidence="1">PEPCase</shortName>
        <ecNumber evidence="1">4.1.1.31</ecNumber>
    </recommendedName>
</protein>
<accession>Q139X8</accession>
<name>CAPP_RHOPS</name>
<keyword id="KW-0120">Carbon dioxide fixation</keyword>
<keyword id="KW-0456">Lyase</keyword>
<keyword id="KW-0460">Magnesium</keyword>
<gene>
    <name evidence="1" type="primary">ppc</name>
    <name type="ordered locus">RPD_1876</name>
</gene>
<feature type="chain" id="PRO_1000025586" description="Phosphoenolpyruvate carboxylase">
    <location>
        <begin position="1"/>
        <end position="933"/>
    </location>
</feature>
<feature type="active site" evidence="1">
    <location>
        <position position="164"/>
    </location>
</feature>
<feature type="active site" evidence="1">
    <location>
        <position position="595"/>
    </location>
</feature>
<comment type="function">
    <text evidence="1">Forms oxaloacetate, a four-carbon dicarboxylic acid source for the tricarboxylic acid cycle.</text>
</comment>
<comment type="catalytic activity">
    <reaction evidence="1">
        <text>oxaloacetate + phosphate = phosphoenolpyruvate + hydrogencarbonate</text>
        <dbReference type="Rhea" id="RHEA:28370"/>
        <dbReference type="ChEBI" id="CHEBI:16452"/>
        <dbReference type="ChEBI" id="CHEBI:17544"/>
        <dbReference type="ChEBI" id="CHEBI:43474"/>
        <dbReference type="ChEBI" id="CHEBI:58702"/>
        <dbReference type="EC" id="4.1.1.31"/>
    </reaction>
</comment>
<comment type="cofactor">
    <cofactor evidence="1">
        <name>Mg(2+)</name>
        <dbReference type="ChEBI" id="CHEBI:18420"/>
    </cofactor>
</comment>
<comment type="similarity">
    <text evidence="1">Belongs to the PEPCase type 1 family.</text>
</comment>
<proteinExistence type="inferred from homology"/>
<dbReference type="EC" id="4.1.1.31" evidence="1"/>
<dbReference type="EMBL" id="CP000283">
    <property type="protein sequence ID" value="ABE39111.1"/>
    <property type="molecule type" value="Genomic_DNA"/>
</dbReference>
<dbReference type="SMR" id="Q139X8"/>
<dbReference type="STRING" id="316057.RPD_1876"/>
<dbReference type="KEGG" id="rpd:RPD_1876"/>
<dbReference type="eggNOG" id="COG2352">
    <property type="taxonomic scope" value="Bacteria"/>
</dbReference>
<dbReference type="HOGENOM" id="CLU_006557_2_0_5"/>
<dbReference type="BioCyc" id="RPAL316057:RPD_RS09420-MONOMER"/>
<dbReference type="Proteomes" id="UP000001818">
    <property type="component" value="Chromosome"/>
</dbReference>
<dbReference type="GO" id="GO:0005829">
    <property type="term" value="C:cytosol"/>
    <property type="evidence" value="ECO:0007669"/>
    <property type="project" value="TreeGrafter"/>
</dbReference>
<dbReference type="GO" id="GO:0000287">
    <property type="term" value="F:magnesium ion binding"/>
    <property type="evidence" value="ECO:0007669"/>
    <property type="project" value="UniProtKB-UniRule"/>
</dbReference>
<dbReference type="GO" id="GO:0008964">
    <property type="term" value="F:phosphoenolpyruvate carboxylase activity"/>
    <property type="evidence" value="ECO:0007669"/>
    <property type="project" value="UniProtKB-UniRule"/>
</dbReference>
<dbReference type="GO" id="GO:0015977">
    <property type="term" value="P:carbon fixation"/>
    <property type="evidence" value="ECO:0007669"/>
    <property type="project" value="UniProtKB-UniRule"/>
</dbReference>
<dbReference type="GO" id="GO:0006107">
    <property type="term" value="P:oxaloacetate metabolic process"/>
    <property type="evidence" value="ECO:0007669"/>
    <property type="project" value="UniProtKB-UniRule"/>
</dbReference>
<dbReference type="GO" id="GO:0006099">
    <property type="term" value="P:tricarboxylic acid cycle"/>
    <property type="evidence" value="ECO:0007669"/>
    <property type="project" value="InterPro"/>
</dbReference>
<dbReference type="Gene3D" id="1.20.1440.90">
    <property type="entry name" value="Phosphoenolpyruvate/pyruvate domain"/>
    <property type="match status" value="1"/>
</dbReference>
<dbReference type="HAMAP" id="MF_00595">
    <property type="entry name" value="PEPcase_type1"/>
    <property type="match status" value="1"/>
</dbReference>
<dbReference type="InterPro" id="IPR021135">
    <property type="entry name" value="PEP_COase"/>
</dbReference>
<dbReference type="InterPro" id="IPR022805">
    <property type="entry name" value="PEP_COase_bac/pln-type"/>
</dbReference>
<dbReference type="InterPro" id="IPR018129">
    <property type="entry name" value="PEP_COase_Lys_AS"/>
</dbReference>
<dbReference type="InterPro" id="IPR033129">
    <property type="entry name" value="PEPCASE_His_AS"/>
</dbReference>
<dbReference type="InterPro" id="IPR015813">
    <property type="entry name" value="Pyrv/PenolPyrv_kinase-like_dom"/>
</dbReference>
<dbReference type="NCBIfam" id="NF000584">
    <property type="entry name" value="PRK00009.1"/>
    <property type="match status" value="1"/>
</dbReference>
<dbReference type="PANTHER" id="PTHR30523">
    <property type="entry name" value="PHOSPHOENOLPYRUVATE CARBOXYLASE"/>
    <property type="match status" value="1"/>
</dbReference>
<dbReference type="PANTHER" id="PTHR30523:SF6">
    <property type="entry name" value="PHOSPHOENOLPYRUVATE CARBOXYLASE"/>
    <property type="match status" value="1"/>
</dbReference>
<dbReference type="Pfam" id="PF00311">
    <property type="entry name" value="PEPcase"/>
    <property type="match status" value="1"/>
</dbReference>
<dbReference type="PRINTS" id="PR00150">
    <property type="entry name" value="PEPCARBXLASE"/>
</dbReference>
<dbReference type="SUPFAM" id="SSF51621">
    <property type="entry name" value="Phosphoenolpyruvate/pyruvate domain"/>
    <property type="match status" value="1"/>
</dbReference>
<dbReference type="PROSITE" id="PS00781">
    <property type="entry name" value="PEPCASE_1"/>
    <property type="match status" value="1"/>
</dbReference>
<dbReference type="PROSITE" id="PS00393">
    <property type="entry name" value="PEPCASE_2"/>
    <property type="match status" value="1"/>
</dbReference>
<evidence type="ECO:0000255" key="1">
    <source>
        <dbReference type="HAMAP-Rule" id="MF_00595"/>
    </source>
</evidence>
<sequence length="933" mass="104371">MSSTILPTDPDVLPNRADDSAFIEEDTRLRNDIRLLGRILGDTVRDQEGSAVFDLVERIRQTSIRFHRDEDKPARRELEAILDDMSASDTVKIVRAFSYFSHLANIAEDQNNIRQMRAGSTAGSAPRAGMLAKTLAHAREEGIGARELREFFKTALVSPVLTAHPTEVRRKSTMDREMEVAALLDQRERLQLTADEWAQNEEQLRRAVVTLWKTNLLRRTKLTVLDEVANGLSFYDYTFLREVPRLHSALEDQLGGGEGGEAEEELASFLRMGSWIGGDRDGNPFVTAEVLQGTLRLQSARVLRFYLDELHELGSELSLASHLAPITEDVRLLAERSPDHSPHRRHEPYRLAVSGIYARLAATAAKLKIDSVRAPVGEAEIYANVQEFKADLDAIHYSLTKYNAGVIARGRLRQLRRAADCFGFHLASLDMRQNSAVHERTMGELMDAARPTSSYLALDEDERIALLTGELRSARPLTSIFIKYSDETVGELAVLHEAARAHSIYGEAAIPQCIISMTKGVSDLLEVAVLLKEVGLIDPSGRCAINIVPLFETIEDLQACAAIMDRLLAIPEYRRLVDSRGGVQEVMLGYSDSNKDGGFVTSGWELYKAEIGLLDVFEHHGVRLRLFHGRGGSVGRGGGPSYDAIVAQPGGAVNGQIRITEQGEIITSKYSNREVGRNNLEILTAATLEASLLQPRRSAPHHDYLEAMEQLSALAFKAYRGLVYETDGFVDYFWSSTVINEISTLNIGSRPASRKKTRAIEDLRAIPWVFSWAQCRLMLPGWYGFGSAVEAWVAEHPDKGTAFLQSMYQEWPFFRMLLSNMDMVLSKSSIAIASRYADLVPDEELRHKIFGRIRIEWHASVDSLLAIMGHERLLQGNPLLERSIRHRFPYLDPLNHVQVQLLREHRTHDPDEQVLRGIQLTINGISAGLRNSG</sequence>
<organism>
    <name type="scientific">Rhodopseudomonas palustris (strain BisB5)</name>
    <dbReference type="NCBI Taxonomy" id="316057"/>
    <lineage>
        <taxon>Bacteria</taxon>
        <taxon>Pseudomonadati</taxon>
        <taxon>Pseudomonadota</taxon>
        <taxon>Alphaproteobacteria</taxon>
        <taxon>Hyphomicrobiales</taxon>
        <taxon>Nitrobacteraceae</taxon>
        <taxon>Rhodopseudomonas</taxon>
    </lineage>
</organism>
<reference key="1">
    <citation type="submission" date="2006-03" db="EMBL/GenBank/DDBJ databases">
        <title>Complete sequence of Rhodopseudomonas palustris BisB5.</title>
        <authorList>
            <consortium name="US DOE Joint Genome Institute"/>
            <person name="Copeland A."/>
            <person name="Lucas S."/>
            <person name="Lapidus A."/>
            <person name="Barry K."/>
            <person name="Detter J.C."/>
            <person name="Glavina del Rio T."/>
            <person name="Hammon N."/>
            <person name="Israni S."/>
            <person name="Dalin E."/>
            <person name="Tice H."/>
            <person name="Pitluck S."/>
            <person name="Chain P."/>
            <person name="Malfatti S."/>
            <person name="Shin M."/>
            <person name="Vergez L."/>
            <person name="Schmutz J."/>
            <person name="Larimer F."/>
            <person name="Land M."/>
            <person name="Hauser L."/>
            <person name="Pelletier D.A."/>
            <person name="Kyrpides N."/>
            <person name="Lykidis A."/>
            <person name="Oda Y."/>
            <person name="Harwood C.S."/>
            <person name="Richardson P."/>
        </authorList>
    </citation>
    <scope>NUCLEOTIDE SEQUENCE [LARGE SCALE GENOMIC DNA]</scope>
    <source>
        <strain>BisB5</strain>
    </source>
</reference>